<evidence type="ECO:0000250" key="1"/>
<evidence type="ECO:0000255" key="2"/>
<evidence type="ECO:0000255" key="3">
    <source>
        <dbReference type="PROSITE-ProRule" id="PRU00076"/>
    </source>
</evidence>
<evidence type="ECO:0000255" key="4">
    <source>
        <dbReference type="PROSITE-ProRule" id="PRU00081"/>
    </source>
</evidence>
<evidence type="ECO:0000255" key="5">
    <source>
        <dbReference type="PROSITE-ProRule" id="PRU00122"/>
    </source>
</evidence>
<evidence type="ECO:0000255" key="6">
    <source>
        <dbReference type="PROSITE-ProRule" id="PRU00739"/>
    </source>
</evidence>
<evidence type="ECO:0000269" key="7">
    <source>
    </source>
</evidence>
<evidence type="ECO:0000305" key="8"/>
<feature type="signal peptide" evidence="2">
    <location>
        <begin position="1"/>
        <end position="24"/>
    </location>
</feature>
<feature type="chain" id="PRO_0000317380" description="Contactin-associated protein like 5-3">
    <location>
        <begin position="25"/>
        <end position="1305"/>
    </location>
</feature>
<feature type="topological domain" description="Extracellular" evidence="2">
    <location>
        <begin position="25"/>
        <end position="1235"/>
    </location>
</feature>
<feature type="transmembrane region" description="Helical" evidence="2">
    <location>
        <begin position="1236"/>
        <end position="1256"/>
    </location>
</feature>
<feature type="topological domain" description="Cytoplasmic" evidence="2">
    <location>
        <begin position="1257"/>
        <end position="1305"/>
    </location>
</feature>
<feature type="domain" description="F5/8 type C" evidence="4">
    <location>
        <begin position="25"/>
        <end position="174"/>
    </location>
</feature>
<feature type="domain" description="Laminin G-like 1" evidence="5">
    <location>
        <begin position="180"/>
        <end position="360"/>
    </location>
</feature>
<feature type="domain" description="Laminin G-like 2" evidence="5">
    <location>
        <begin position="367"/>
        <end position="544"/>
    </location>
</feature>
<feature type="domain" description="EGF-like 1" evidence="3">
    <location>
        <begin position="546"/>
        <end position="583"/>
    </location>
</feature>
<feature type="domain" description="Fibrinogen C-terminal" evidence="6">
    <location>
        <begin position="584"/>
        <end position="790"/>
    </location>
</feature>
<feature type="domain" description="Laminin G-like 3" evidence="5">
    <location>
        <begin position="791"/>
        <end position="956"/>
    </location>
</feature>
<feature type="domain" description="EGF-like 2" evidence="3">
    <location>
        <begin position="957"/>
        <end position="995"/>
    </location>
</feature>
<feature type="domain" description="Laminin G-like 4" evidence="5">
    <location>
        <begin position="1013"/>
        <end position="1198"/>
    </location>
</feature>
<feature type="glycosylation site" description="N-linked (GlcNAc...) asparagine" evidence="2">
    <location>
        <position position="282"/>
    </location>
</feature>
<feature type="glycosylation site" description="N-linked (GlcNAc...) asparagine" evidence="2">
    <location>
        <position position="496"/>
    </location>
</feature>
<feature type="glycosylation site" description="N-linked (GlcNAc...) asparagine" evidence="2">
    <location>
        <position position="571"/>
    </location>
</feature>
<feature type="glycosylation site" description="N-linked (GlcNAc...) asparagine" evidence="2">
    <location>
        <position position="1023"/>
    </location>
</feature>
<feature type="glycosylation site" description="N-linked (GlcNAc...) asparagine" evidence="2">
    <location>
        <position position="1057"/>
    </location>
</feature>
<feature type="disulfide bond" evidence="1">
    <location>
        <begin position="329"/>
        <end position="360"/>
    </location>
</feature>
<feature type="disulfide bond" evidence="1">
    <location>
        <begin position="512"/>
        <end position="544"/>
    </location>
</feature>
<feature type="disulfide bond" evidence="1">
    <location>
        <begin position="550"/>
        <end position="561"/>
    </location>
</feature>
<feature type="disulfide bond" evidence="1">
    <location>
        <begin position="555"/>
        <end position="570"/>
    </location>
</feature>
<feature type="disulfide bond" evidence="1">
    <location>
        <begin position="572"/>
        <end position="582"/>
    </location>
</feature>
<feature type="disulfide bond" evidence="1">
    <location>
        <begin position="929"/>
        <end position="956"/>
    </location>
</feature>
<feature type="disulfide bond" evidence="1">
    <location>
        <begin position="960"/>
        <end position="973"/>
    </location>
</feature>
<feature type="disulfide bond" evidence="1">
    <location>
        <begin position="967"/>
        <end position="982"/>
    </location>
</feature>
<feature type="disulfide bond" evidence="1">
    <location>
        <begin position="984"/>
        <end position="994"/>
    </location>
</feature>
<feature type="disulfide bond" evidence="1">
    <location>
        <begin position="1163"/>
        <end position="1198"/>
    </location>
</feature>
<comment type="function">
    <text>May play a role in the correct development and proper functioning of the peripheral and central nervous system and be involved in cell adhesion and intercellular communication.</text>
</comment>
<comment type="subcellular location">
    <subcellularLocation>
        <location evidence="8">Membrane</location>
        <topology evidence="8">Single-pass type I membrane protein</topology>
    </subcellularLocation>
</comment>
<comment type="tissue specificity">
    <text evidence="7">Expressed in brain.</text>
</comment>
<comment type="developmental stage">
    <text evidence="7">Expressed from 6 dpc in brain.</text>
</comment>
<comment type="similarity">
    <text evidence="8">Belongs to the neurexin family.</text>
</comment>
<reference key="1">
    <citation type="journal article" date="2009" name="PLoS Biol.">
        <title>Lineage-specific biology revealed by a finished genome assembly of the mouse.</title>
        <authorList>
            <person name="Church D.M."/>
            <person name="Goodstadt L."/>
            <person name="Hillier L.W."/>
            <person name="Zody M.C."/>
            <person name="Goldstein S."/>
            <person name="She X."/>
            <person name="Bult C.J."/>
            <person name="Agarwala R."/>
            <person name="Cherry J.L."/>
            <person name="DiCuccio M."/>
            <person name="Hlavina W."/>
            <person name="Kapustin Y."/>
            <person name="Meric P."/>
            <person name="Maglott D."/>
            <person name="Birtle Z."/>
            <person name="Marques A.C."/>
            <person name="Graves T."/>
            <person name="Zhou S."/>
            <person name="Teague B."/>
            <person name="Potamousis K."/>
            <person name="Churas C."/>
            <person name="Place M."/>
            <person name="Herschleb J."/>
            <person name="Runnheim R."/>
            <person name="Forrest D."/>
            <person name="Amos-Landgraf J."/>
            <person name="Schwartz D.C."/>
            <person name="Cheng Z."/>
            <person name="Lindblad-Toh K."/>
            <person name="Eichler E.E."/>
            <person name="Ponting C.P."/>
        </authorList>
    </citation>
    <scope>NUCLEOTIDE SEQUENCE [LARGE SCALE GENOMIC DNA]</scope>
    <source>
        <strain>C57BL/6J</strain>
    </source>
</reference>
<reference key="2">
    <citation type="journal article" date="2006" name="Mamm. Genome">
        <title>New members of the neurexin superfamily: multiple rodent homologues of the human CASPR5 gene.</title>
        <authorList>
            <person name="Traut W."/>
            <person name="Weichenhan D."/>
            <person name="Himmelbauer H."/>
            <person name="Winking H."/>
        </authorList>
    </citation>
    <scope>IDENTIFICATION</scope>
    <scope>TISSUE SPECIFICITY</scope>
    <scope>DEVELOPMENTAL STAGE</scope>
</reference>
<proteinExistence type="evidence at transcript level"/>
<organism>
    <name type="scientific">Mus musculus</name>
    <name type="common">Mouse</name>
    <dbReference type="NCBI Taxonomy" id="10090"/>
    <lineage>
        <taxon>Eukaryota</taxon>
        <taxon>Metazoa</taxon>
        <taxon>Chordata</taxon>
        <taxon>Craniata</taxon>
        <taxon>Vertebrata</taxon>
        <taxon>Euteleostomi</taxon>
        <taxon>Mammalia</taxon>
        <taxon>Eutheria</taxon>
        <taxon>Euarchontoglires</taxon>
        <taxon>Glires</taxon>
        <taxon>Rodentia</taxon>
        <taxon>Myomorpha</taxon>
        <taxon>Muroidea</taxon>
        <taxon>Muridae</taxon>
        <taxon>Murinae</taxon>
        <taxon>Mus</taxon>
        <taxon>Mus</taxon>
    </lineage>
</organism>
<sequence>MDSVPRLNSVFTLVLSGLWHFGLTATNYNCDDPLTSFLSLRAFSSSSDLTGRSSPAQLNWRMGTGGWSPADSNAQQWLQMDLGNRVEITAVATQGRYGSSDWVTSYRLMFSDTGHNWQQYTQEGSIWRFVGNMNANSVVHHKLLNSVRARFVRFVPLEWNPNGKIGMRVEVYGCSYRSDVADFDGWSSLLYRFNQKTMSTLKDVISLKFKSIQRDGVLFHGEGQRGDHITLELQNGRLALYLNLDDSKAQVSSTAPLATLGSLLDDQHWHSVLLERVGKQANFTVDKNTQHFQTKGETDALDIDYELSFGGIPVPSKPGTFLKKNFHGCIENLYYNGVNIIDLAKRRKHQIYSGNVTFSCSEPQTVPITFVNSRSSYLLLTGTPQIDGLSVSFQFRTWNEDGLLLSTELSEGSGTLLLILEGGTLRLLIKKLARHGTEIFTGSGLNDGMWHSVSISARRNRVTLTLDNDAASLPPDTSWLQIYSGNSYYFGGCPDNLTDSQCLNPIKAFQGCMRLIFIDNQPKDLISVQQGSLGSFSDLHIDLCSIKDRCLPNYCEHGGQCAQTWTNFYCNCSDTGYTGATCHDSIYEQSCEVYRHRGKTAEFFYVDSDGSGPLGPLQVFCNITEDKIWMTVQHNNTGLTWVQGSNPEKPYAMTLNYGGSLEQLEALIDGSEHCEQEVTYYCKRSRLLNTPDGVPFTWWIGRSNEKHPYWGGSLPGVQQCGCGLEESCLDIRHFCNCDADTDEWTNDTGYLSFKDHLPVTQIIITDTNRSKSEAAWRIGPLRCYGDRHFWNAVSFSTEASFLHFPTFRVEFSADIFFFFKTTALSGVFLEILGIKDFLRLEMSSPSEVIFAIDVGNGPIDLLVQSPYPLNDNQWHYIRAERNLKETSLQVDNLPQSMREASEEGHFQFQLNSQLFVGGKSSRQKGFFGCIRSLHLNGQNIDLEERAKVTSGVRPGCPGHCSSYGRNCQNGGKCVEKHIGYSCDCTNSPYEGPFCQKEISALFDSDTSVTYMFQEPYSVTKNTNLSSSAIYTDTAPSKEIIMLSFMTAQAPTLLLYLNFSSQNFLAILLSWNGSLQIHYQLSKEESHVFTINTENLANRRVHQVKMSRDGPELSIQMDQQLFSYTFSLESEFQRARSLVLGKVTETLGLDPEVARANTLGFVGCLSSVQYNHITPLKAALRHASISPVTVQRTLTESSCVSMVDSDANAVTTVYSSTDPFGERDEREPLTNAVPSDLAVIGGIIAVVTFISFSVIGIMTHFFYQHKRSHYASQMKEKEYPENVDSSSRNDIDLQNTTRECKQEDFI</sequence>
<dbReference type="EMBL" id="AC118684">
    <property type="status" value="NOT_ANNOTATED_CDS"/>
    <property type="molecule type" value="Genomic_DNA"/>
</dbReference>
<dbReference type="EMBL" id="AC120548">
    <property type="status" value="NOT_ANNOTATED_CDS"/>
    <property type="molecule type" value="Genomic_DNA"/>
</dbReference>
<dbReference type="EMBL" id="AC122209">
    <property type="status" value="NOT_ANNOTATED_CDS"/>
    <property type="molecule type" value="Genomic_DNA"/>
</dbReference>
<dbReference type="EMBL" id="AC127557">
    <property type="status" value="NOT_ANNOTATED_CDS"/>
    <property type="molecule type" value="Genomic_DNA"/>
</dbReference>
<dbReference type="EMBL" id="AC154498">
    <property type="status" value="NOT_ANNOTATED_CDS"/>
    <property type="molecule type" value="Genomic_DNA"/>
</dbReference>
<dbReference type="EMBL" id="CT025622">
    <property type="status" value="NOT_ANNOTATED_CDS"/>
    <property type="molecule type" value="Genomic_DNA"/>
</dbReference>
<dbReference type="EMBL" id="CT025736">
    <property type="status" value="NOT_ANNOTATED_CDS"/>
    <property type="molecule type" value="Genomic_DNA"/>
</dbReference>
<dbReference type="EMBL" id="BN000867">
    <property type="protein sequence ID" value="CAJ55747.1"/>
    <property type="molecule type" value="mRNA"/>
</dbReference>
<dbReference type="CCDS" id="CCDS37671.1"/>
<dbReference type="RefSeq" id="NP_001075122.1">
    <property type="nucleotide sequence ID" value="NM_001081653.3"/>
</dbReference>
<dbReference type="SMR" id="Q0V8T7"/>
<dbReference type="FunCoup" id="Q0V8T7">
    <property type="interactions" value="31"/>
</dbReference>
<dbReference type="STRING" id="10090.ENSMUSP00000075416"/>
<dbReference type="GlyConnect" id="2234">
    <property type="glycosylation" value="3 N-Linked glycans (1 site)"/>
</dbReference>
<dbReference type="GlyCosmos" id="Q0V8T7">
    <property type="glycosylation" value="5 sites, 3 glycans"/>
</dbReference>
<dbReference type="GlyGen" id="Q0V8T7">
    <property type="glycosylation" value="6 sites, 6 N-linked glycans (3 sites)"/>
</dbReference>
<dbReference type="iPTMnet" id="Q0V8T7"/>
<dbReference type="PhosphoSitePlus" id="Q0V8T7"/>
<dbReference type="jPOST" id="Q0V8T7"/>
<dbReference type="PaxDb" id="10090-ENSMUSP00000075416"/>
<dbReference type="ProteomicsDB" id="285414"/>
<dbReference type="DNASU" id="620292"/>
<dbReference type="Ensembl" id="ENSMUST00000076038.7">
    <property type="protein sequence ID" value="ENSMUSP00000075416.6"/>
    <property type="gene ID" value="ENSMUSG00000038048.9"/>
</dbReference>
<dbReference type="GeneID" id="620292"/>
<dbReference type="KEGG" id="mmu:620292"/>
<dbReference type="UCSC" id="uc008dew.1">
    <property type="organism name" value="mouse"/>
</dbReference>
<dbReference type="AGR" id="MGI:3646013"/>
<dbReference type="CTD" id="620292"/>
<dbReference type="MGI" id="MGI:3646013">
    <property type="gene designation" value="Cntnap5c"/>
</dbReference>
<dbReference type="VEuPathDB" id="HostDB:ENSMUSG00000038048"/>
<dbReference type="eggNOG" id="KOG3516">
    <property type="taxonomic scope" value="Eukaryota"/>
</dbReference>
<dbReference type="GeneTree" id="ENSGT00940000164023"/>
<dbReference type="HOGENOM" id="CLU_003504_1_0_1"/>
<dbReference type="InParanoid" id="Q0V8T7"/>
<dbReference type="OMA" id="HFNMERT"/>
<dbReference type="OrthoDB" id="26719at2759"/>
<dbReference type="PhylomeDB" id="Q0V8T7"/>
<dbReference type="TreeFam" id="TF321823"/>
<dbReference type="BioGRID-ORCS" id="620292">
    <property type="hits" value="0 hits in 76 CRISPR screens"/>
</dbReference>
<dbReference type="ChiTaRS" id="Cntnap5c">
    <property type="organism name" value="mouse"/>
</dbReference>
<dbReference type="PRO" id="PR:Q0V8T7"/>
<dbReference type="Proteomes" id="UP000000589">
    <property type="component" value="Chromosome 17"/>
</dbReference>
<dbReference type="RNAct" id="Q0V8T7">
    <property type="molecule type" value="protein"/>
</dbReference>
<dbReference type="Bgee" id="ENSMUSG00000038048">
    <property type="expression patterns" value="Expressed in pyramidal layer of CA1 and 15 other cell types or tissues"/>
</dbReference>
<dbReference type="GO" id="GO:0016020">
    <property type="term" value="C:membrane"/>
    <property type="evidence" value="ECO:0007669"/>
    <property type="project" value="UniProtKB-SubCell"/>
</dbReference>
<dbReference type="GO" id="GO:0045202">
    <property type="term" value="C:synapse"/>
    <property type="evidence" value="ECO:0007669"/>
    <property type="project" value="UniProtKB-ARBA"/>
</dbReference>
<dbReference type="GO" id="GO:0007155">
    <property type="term" value="P:cell adhesion"/>
    <property type="evidence" value="ECO:0007669"/>
    <property type="project" value="UniProtKB-KW"/>
</dbReference>
<dbReference type="CDD" id="cd00054">
    <property type="entry name" value="EGF_CA"/>
    <property type="match status" value="2"/>
</dbReference>
<dbReference type="CDD" id="cd00057">
    <property type="entry name" value="FA58C"/>
    <property type="match status" value="1"/>
</dbReference>
<dbReference type="CDD" id="cd00110">
    <property type="entry name" value="LamG"/>
    <property type="match status" value="4"/>
</dbReference>
<dbReference type="FunFam" id="2.60.120.260:FF:000016">
    <property type="entry name" value="Contactin-associated protein-like 4 isoform 1"/>
    <property type="match status" value="1"/>
</dbReference>
<dbReference type="FunFam" id="2.60.120.200:FF:000026">
    <property type="entry name" value="contactin-associated protein-like 4 isoform X1"/>
    <property type="match status" value="1"/>
</dbReference>
<dbReference type="Gene3D" id="2.60.120.1000">
    <property type="match status" value="1"/>
</dbReference>
<dbReference type="Gene3D" id="2.60.120.200">
    <property type="match status" value="4"/>
</dbReference>
<dbReference type="Gene3D" id="2.60.120.260">
    <property type="entry name" value="Galactose-binding domain-like"/>
    <property type="match status" value="1"/>
</dbReference>
<dbReference type="Gene3D" id="2.10.25.10">
    <property type="entry name" value="Laminin"/>
    <property type="match status" value="2"/>
</dbReference>
<dbReference type="InterPro" id="IPR013320">
    <property type="entry name" value="ConA-like_dom_sf"/>
</dbReference>
<dbReference type="InterPro" id="IPR000742">
    <property type="entry name" value="EGF-like_dom"/>
</dbReference>
<dbReference type="InterPro" id="IPR000421">
    <property type="entry name" value="FA58C"/>
</dbReference>
<dbReference type="InterPro" id="IPR036056">
    <property type="entry name" value="Fibrinogen-like_C"/>
</dbReference>
<dbReference type="InterPro" id="IPR002181">
    <property type="entry name" value="Fibrinogen_a/b/g_C_dom"/>
</dbReference>
<dbReference type="InterPro" id="IPR008979">
    <property type="entry name" value="Galactose-bd-like_sf"/>
</dbReference>
<dbReference type="InterPro" id="IPR001791">
    <property type="entry name" value="Laminin_G"/>
</dbReference>
<dbReference type="InterPro" id="IPR050372">
    <property type="entry name" value="Neurexin-related_CASP"/>
</dbReference>
<dbReference type="PANTHER" id="PTHR15036:SF46">
    <property type="entry name" value="CONTACTIN-ASSOCIATED PROTEIN-LIKE 5"/>
    <property type="match status" value="1"/>
</dbReference>
<dbReference type="PANTHER" id="PTHR15036">
    <property type="entry name" value="PIKACHURIN-LIKE PROTEIN"/>
    <property type="match status" value="1"/>
</dbReference>
<dbReference type="Pfam" id="PF00754">
    <property type="entry name" value="F5_F8_type_C"/>
    <property type="match status" value="1"/>
</dbReference>
<dbReference type="Pfam" id="PF02210">
    <property type="entry name" value="Laminin_G_2"/>
    <property type="match status" value="4"/>
</dbReference>
<dbReference type="SMART" id="SM00181">
    <property type="entry name" value="EGF"/>
    <property type="match status" value="2"/>
</dbReference>
<dbReference type="SMART" id="SM00231">
    <property type="entry name" value="FA58C"/>
    <property type="match status" value="1"/>
</dbReference>
<dbReference type="SMART" id="SM00282">
    <property type="entry name" value="LamG"/>
    <property type="match status" value="4"/>
</dbReference>
<dbReference type="SUPFAM" id="SSF49899">
    <property type="entry name" value="Concanavalin A-like lectins/glucanases"/>
    <property type="match status" value="4"/>
</dbReference>
<dbReference type="SUPFAM" id="SSF57196">
    <property type="entry name" value="EGF/Laminin"/>
    <property type="match status" value="1"/>
</dbReference>
<dbReference type="SUPFAM" id="SSF56496">
    <property type="entry name" value="Fibrinogen C-terminal domain-like"/>
    <property type="match status" value="1"/>
</dbReference>
<dbReference type="SUPFAM" id="SSF49785">
    <property type="entry name" value="Galactose-binding domain-like"/>
    <property type="match status" value="1"/>
</dbReference>
<dbReference type="PROSITE" id="PS50026">
    <property type="entry name" value="EGF_3"/>
    <property type="match status" value="2"/>
</dbReference>
<dbReference type="PROSITE" id="PS01286">
    <property type="entry name" value="FA58C_2"/>
    <property type="match status" value="1"/>
</dbReference>
<dbReference type="PROSITE" id="PS50022">
    <property type="entry name" value="FA58C_3"/>
    <property type="match status" value="1"/>
</dbReference>
<dbReference type="PROSITE" id="PS51406">
    <property type="entry name" value="FIBRINOGEN_C_2"/>
    <property type="match status" value="1"/>
</dbReference>
<dbReference type="PROSITE" id="PS50025">
    <property type="entry name" value="LAM_G_DOMAIN"/>
    <property type="match status" value="4"/>
</dbReference>
<keyword id="KW-0130">Cell adhesion</keyword>
<keyword id="KW-1015">Disulfide bond</keyword>
<keyword id="KW-0245">EGF-like domain</keyword>
<keyword id="KW-0325">Glycoprotein</keyword>
<keyword id="KW-0472">Membrane</keyword>
<keyword id="KW-1185">Reference proteome</keyword>
<keyword id="KW-0677">Repeat</keyword>
<keyword id="KW-0732">Signal</keyword>
<keyword id="KW-0812">Transmembrane</keyword>
<keyword id="KW-1133">Transmembrane helix</keyword>
<protein>
    <recommendedName>
        <fullName>Contactin-associated protein like 5-3</fullName>
    </recommendedName>
    <alternativeName>
        <fullName>Cell recognition molecule Caspr5-3</fullName>
    </alternativeName>
    <alternativeName>
        <fullName>Cell recognition molecule Caspr5c</fullName>
    </alternativeName>
    <alternativeName>
        <fullName>Contactin-associated protein-like 5c</fullName>
    </alternativeName>
</protein>
<accession>Q0V8T7</accession>
<gene>
    <name type="primary">Cntnap5c</name>
    <name type="synonym">Caspr5-3</name>
</gene>
<name>CTP5C_MOUSE</name>